<name>UBIC_PSYA2</name>
<sequence>MTSHLCCSNYSSPLPELLVCLHTEGSLTALLEVKAGQPLRVERSFEGYRLLSLAQKKQLGMQGAALSRPRLAWVREVQLYGNDELPWVQAQSLFPLSSLQGSARRLQQLKSTPIGYVLFKRSRTLPNQRFIKHTVDGWQRQTLYNWYGRPLLISETFLPQFCEKQLDI</sequence>
<reference key="1">
    <citation type="journal article" date="2010" name="Appl. Environ. Microbiol.">
        <title>The genome sequence of Psychrobacter arcticus 273-4, a psychroactive Siberian permafrost bacterium, reveals mechanisms for adaptation to low-temperature growth.</title>
        <authorList>
            <person name="Ayala-del-Rio H.L."/>
            <person name="Chain P.S."/>
            <person name="Grzymski J.J."/>
            <person name="Ponder M.A."/>
            <person name="Ivanova N."/>
            <person name="Bergholz P.W."/>
            <person name="Di Bartolo G."/>
            <person name="Hauser L."/>
            <person name="Land M."/>
            <person name="Bakermans C."/>
            <person name="Rodrigues D."/>
            <person name="Klappenbach J."/>
            <person name="Zarka D."/>
            <person name="Larimer F."/>
            <person name="Richardson P."/>
            <person name="Murray A."/>
            <person name="Thomashow M."/>
            <person name="Tiedje J.M."/>
        </authorList>
    </citation>
    <scope>NUCLEOTIDE SEQUENCE [LARGE SCALE GENOMIC DNA]</scope>
    <source>
        <strain>DSM 17307 / VKM B-2377 / 273-4</strain>
    </source>
</reference>
<comment type="function">
    <text evidence="1">Removes the pyruvyl group from chorismate, with concomitant aromatization of the ring, to provide 4-hydroxybenzoate (4HB) for the ubiquinone pathway.</text>
</comment>
<comment type="catalytic activity">
    <reaction evidence="1">
        <text>chorismate = 4-hydroxybenzoate + pyruvate</text>
        <dbReference type="Rhea" id="RHEA:16505"/>
        <dbReference type="ChEBI" id="CHEBI:15361"/>
        <dbReference type="ChEBI" id="CHEBI:17879"/>
        <dbReference type="ChEBI" id="CHEBI:29748"/>
        <dbReference type="EC" id="4.1.3.40"/>
    </reaction>
</comment>
<comment type="pathway">
    <text evidence="1">Cofactor biosynthesis; ubiquinone biosynthesis.</text>
</comment>
<comment type="subcellular location">
    <subcellularLocation>
        <location evidence="1">Cytoplasm</location>
    </subcellularLocation>
</comment>
<comment type="similarity">
    <text evidence="1">Belongs to the UbiC family.</text>
</comment>
<organism>
    <name type="scientific">Psychrobacter arcticus (strain DSM 17307 / VKM B-2377 / 273-4)</name>
    <dbReference type="NCBI Taxonomy" id="259536"/>
    <lineage>
        <taxon>Bacteria</taxon>
        <taxon>Pseudomonadati</taxon>
        <taxon>Pseudomonadota</taxon>
        <taxon>Gammaproteobacteria</taxon>
        <taxon>Moraxellales</taxon>
        <taxon>Moraxellaceae</taxon>
        <taxon>Psychrobacter</taxon>
    </lineage>
</organism>
<feature type="chain" id="PRO_0000240564" description="Probable chorismate pyruvate-lyase">
    <location>
        <begin position="1"/>
        <end position="168"/>
    </location>
</feature>
<feature type="binding site" evidence="1">
    <location>
        <position position="75"/>
    </location>
    <ligand>
        <name>substrate</name>
    </ligand>
</feature>
<feature type="binding site" evidence="1">
    <location>
        <position position="114"/>
    </location>
    <ligand>
        <name>substrate</name>
    </ligand>
</feature>
<feature type="binding site" evidence="1">
    <location>
        <position position="155"/>
    </location>
    <ligand>
        <name>substrate</name>
    </ligand>
</feature>
<keyword id="KW-0963">Cytoplasm</keyword>
<keyword id="KW-0456">Lyase</keyword>
<keyword id="KW-0670">Pyruvate</keyword>
<keyword id="KW-1185">Reference proteome</keyword>
<keyword id="KW-0831">Ubiquinone biosynthesis</keyword>
<gene>
    <name evidence="1" type="primary">ubiC</name>
    <name type="ordered locus">Psyc_0289</name>
</gene>
<dbReference type="EC" id="4.1.3.40" evidence="1"/>
<dbReference type="EMBL" id="CP000082">
    <property type="protein sequence ID" value="AAZ18159.1"/>
    <property type="molecule type" value="Genomic_DNA"/>
</dbReference>
<dbReference type="RefSeq" id="WP_011279597.1">
    <property type="nucleotide sequence ID" value="NC_007204.1"/>
</dbReference>
<dbReference type="SMR" id="Q4FUZ9"/>
<dbReference type="STRING" id="259536.Psyc_0289"/>
<dbReference type="KEGG" id="par:Psyc_0289"/>
<dbReference type="eggNOG" id="COG3161">
    <property type="taxonomic scope" value="Bacteria"/>
</dbReference>
<dbReference type="HOGENOM" id="CLU_096824_2_1_6"/>
<dbReference type="OrthoDB" id="9789493at2"/>
<dbReference type="UniPathway" id="UPA00232"/>
<dbReference type="Proteomes" id="UP000000546">
    <property type="component" value="Chromosome"/>
</dbReference>
<dbReference type="GO" id="GO:0005829">
    <property type="term" value="C:cytosol"/>
    <property type="evidence" value="ECO:0007669"/>
    <property type="project" value="TreeGrafter"/>
</dbReference>
<dbReference type="GO" id="GO:0008813">
    <property type="term" value="F:chorismate lyase activity"/>
    <property type="evidence" value="ECO:0007669"/>
    <property type="project" value="UniProtKB-UniRule"/>
</dbReference>
<dbReference type="GO" id="GO:0042866">
    <property type="term" value="P:pyruvate biosynthetic process"/>
    <property type="evidence" value="ECO:0007669"/>
    <property type="project" value="UniProtKB-UniRule"/>
</dbReference>
<dbReference type="GO" id="GO:0006744">
    <property type="term" value="P:ubiquinone biosynthetic process"/>
    <property type="evidence" value="ECO:0007669"/>
    <property type="project" value="UniProtKB-UniRule"/>
</dbReference>
<dbReference type="Gene3D" id="3.40.1410.10">
    <property type="entry name" value="Chorismate lyase-like"/>
    <property type="match status" value="1"/>
</dbReference>
<dbReference type="HAMAP" id="MF_01632">
    <property type="entry name" value="UbiC"/>
    <property type="match status" value="1"/>
</dbReference>
<dbReference type="InterPro" id="IPR007440">
    <property type="entry name" value="Chorismate--pyruvate_lyase"/>
</dbReference>
<dbReference type="InterPro" id="IPR028978">
    <property type="entry name" value="Chorismate_lyase_/UTRA_dom_sf"/>
</dbReference>
<dbReference type="PANTHER" id="PTHR38683">
    <property type="entry name" value="CHORISMATE PYRUVATE-LYASE"/>
    <property type="match status" value="1"/>
</dbReference>
<dbReference type="PANTHER" id="PTHR38683:SF1">
    <property type="entry name" value="CHORISMATE PYRUVATE-LYASE"/>
    <property type="match status" value="1"/>
</dbReference>
<dbReference type="Pfam" id="PF04345">
    <property type="entry name" value="Chor_lyase"/>
    <property type="match status" value="1"/>
</dbReference>
<dbReference type="SUPFAM" id="SSF64288">
    <property type="entry name" value="Chorismate lyase-like"/>
    <property type="match status" value="1"/>
</dbReference>
<evidence type="ECO:0000255" key="1">
    <source>
        <dbReference type="HAMAP-Rule" id="MF_01632"/>
    </source>
</evidence>
<accession>Q4FUZ9</accession>
<proteinExistence type="inferred from homology"/>
<protein>
    <recommendedName>
        <fullName evidence="1">Probable chorismate pyruvate-lyase</fullName>
        <shortName evidence="1">CL</shortName>
        <shortName evidence="1">CPL</shortName>
        <ecNumber evidence="1">4.1.3.40</ecNumber>
    </recommendedName>
</protein>